<sequence length="365" mass="39627">MVANTTGEIFKVTTFGLSHGKALGATIDGCPAGLNLSNEDIQNELNKRRPGTSNLTTSRDEKDKVEILSGIFNGMTDGTPITAIIFNKDQRSKNYDNLKNNPRPGHGDFCWREKFGNYDYRGGGRGSGRVTIGHVIGGAVSKKLLQQHNITTTAHVTSIHNIHSTKKFTLNTIKENITKNNVRCADLEVATLMEDEILKLKERGDSTGGKVEIIIDNVPVGLGQPVFDKIDGDFAKALMNIGAVKAVEVGCGIESSTLTGHEMNDEYYIEDNKIQTKTNNAGGIVGGMTNGMPIILKISVKPTPSVSGIQNTVNLEKRENSTIEIEGRHDPCICPRITTVAEAVCNMVLADHMIRAGYIHPDKIN</sequence>
<evidence type="ECO:0000255" key="1">
    <source>
        <dbReference type="HAMAP-Rule" id="MF_00300"/>
    </source>
</evidence>
<keyword id="KW-0028">Amino-acid biosynthesis</keyword>
<keyword id="KW-0057">Aromatic amino acid biosynthesis</keyword>
<keyword id="KW-0274">FAD</keyword>
<keyword id="KW-0285">Flavoprotein</keyword>
<keyword id="KW-0288">FMN</keyword>
<keyword id="KW-0456">Lyase</keyword>
<keyword id="KW-0521">NADP</keyword>
<keyword id="KW-1185">Reference proteome</keyword>
<reference key="1">
    <citation type="journal article" date="2006" name="J. Bacteriol.">
        <title>The genome sequence of Methanosphaera stadtmanae reveals why this human intestinal archaeon is restricted to methanol and H2 for methane formation and ATP synthesis.</title>
        <authorList>
            <person name="Fricke W.F."/>
            <person name="Seedorf H."/>
            <person name="Henne A."/>
            <person name="Kruer M."/>
            <person name="Liesegang H."/>
            <person name="Hedderich R."/>
            <person name="Gottschalk G."/>
            <person name="Thauer R.K."/>
        </authorList>
    </citation>
    <scope>NUCLEOTIDE SEQUENCE [LARGE SCALE GENOMIC DNA]</scope>
    <source>
        <strain>ATCC 43021 / DSM 3091 / JCM 11832 / MCB-3</strain>
    </source>
</reference>
<organism>
    <name type="scientific">Methanosphaera stadtmanae (strain ATCC 43021 / DSM 3091 / JCM 11832 / MCB-3)</name>
    <dbReference type="NCBI Taxonomy" id="339860"/>
    <lineage>
        <taxon>Archaea</taxon>
        <taxon>Methanobacteriati</taxon>
        <taxon>Methanobacteriota</taxon>
        <taxon>Methanomada group</taxon>
        <taxon>Methanobacteria</taxon>
        <taxon>Methanobacteriales</taxon>
        <taxon>Methanobacteriaceae</taxon>
        <taxon>Methanosphaera</taxon>
    </lineage>
</organism>
<protein>
    <recommendedName>
        <fullName evidence="1">Chorismate synthase</fullName>
        <shortName evidence="1">CS</shortName>
        <ecNumber evidence="1">4.2.3.5</ecNumber>
    </recommendedName>
    <alternativeName>
        <fullName evidence="1">5-enolpyruvylshikimate-3-phosphate phospholyase</fullName>
    </alternativeName>
</protein>
<dbReference type="EC" id="4.2.3.5" evidence="1"/>
<dbReference type="EMBL" id="CP000102">
    <property type="protein sequence ID" value="ABC56977.1"/>
    <property type="molecule type" value="Genomic_DNA"/>
</dbReference>
<dbReference type="RefSeq" id="WP_011406177.1">
    <property type="nucleotide sequence ID" value="NC_007681.1"/>
</dbReference>
<dbReference type="SMR" id="Q2NGS6"/>
<dbReference type="STRING" id="339860.Msp_0579"/>
<dbReference type="GeneID" id="41325153"/>
<dbReference type="KEGG" id="mst:Msp_0579"/>
<dbReference type="eggNOG" id="arCOG04133">
    <property type="taxonomic scope" value="Archaea"/>
</dbReference>
<dbReference type="HOGENOM" id="CLU_034547_0_2_2"/>
<dbReference type="OrthoDB" id="33049at2157"/>
<dbReference type="UniPathway" id="UPA00053">
    <property type="reaction ID" value="UER00090"/>
</dbReference>
<dbReference type="Proteomes" id="UP000001931">
    <property type="component" value="Chromosome"/>
</dbReference>
<dbReference type="GO" id="GO:0005829">
    <property type="term" value="C:cytosol"/>
    <property type="evidence" value="ECO:0007669"/>
    <property type="project" value="TreeGrafter"/>
</dbReference>
<dbReference type="GO" id="GO:0004107">
    <property type="term" value="F:chorismate synthase activity"/>
    <property type="evidence" value="ECO:0007669"/>
    <property type="project" value="UniProtKB-UniRule"/>
</dbReference>
<dbReference type="GO" id="GO:0010181">
    <property type="term" value="F:FMN binding"/>
    <property type="evidence" value="ECO:0007669"/>
    <property type="project" value="TreeGrafter"/>
</dbReference>
<dbReference type="GO" id="GO:0008652">
    <property type="term" value="P:amino acid biosynthetic process"/>
    <property type="evidence" value="ECO:0007669"/>
    <property type="project" value="UniProtKB-KW"/>
</dbReference>
<dbReference type="GO" id="GO:0009073">
    <property type="term" value="P:aromatic amino acid family biosynthetic process"/>
    <property type="evidence" value="ECO:0007669"/>
    <property type="project" value="UniProtKB-KW"/>
</dbReference>
<dbReference type="GO" id="GO:0009423">
    <property type="term" value="P:chorismate biosynthetic process"/>
    <property type="evidence" value="ECO:0007669"/>
    <property type="project" value="UniProtKB-UniRule"/>
</dbReference>
<dbReference type="CDD" id="cd07304">
    <property type="entry name" value="Chorismate_synthase"/>
    <property type="match status" value="1"/>
</dbReference>
<dbReference type="Gene3D" id="3.60.150.10">
    <property type="entry name" value="Chorismate synthase AroC"/>
    <property type="match status" value="1"/>
</dbReference>
<dbReference type="HAMAP" id="MF_00300">
    <property type="entry name" value="Chorismate_synth"/>
    <property type="match status" value="1"/>
</dbReference>
<dbReference type="InterPro" id="IPR000453">
    <property type="entry name" value="Chorismate_synth"/>
</dbReference>
<dbReference type="InterPro" id="IPR035904">
    <property type="entry name" value="Chorismate_synth_AroC_sf"/>
</dbReference>
<dbReference type="InterPro" id="IPR020541">
    <property type="entry name" value="Chorismate_synthase_CS"/>
</dbReference>
<dbReference type="NCBIfam" id="TIGR00033">
    <property type="entry name" value="aroC"/>
    <property type="match status" value="1"/>
</dbReference>
<dbReference type="NCBIfam" id="NF003793">
    <property type="entry name" value="PRK05382.1"/>
    <property type="match status" value="1"/>
</dbReference>
<dbReference type="PANTHER" id="PTHR21085">
    <property type="entry name" value="CHORISMATE SYNTHASE"/>
    <property type="match status" value="1"/>
</dbReference>
<dbReference type="PANTHER" id="PTHR21085:SF0">
    <property type="entry name" value="CHORISMATE SYNTHASE"/>
    <property type="match status" value="1"/>
</dbReference>
<dbReference type="Pfam" id="PF01264">
    <property type="entry name" value="Chorismate_synt"/>
    <property type="match status" value="1"/>
</dbReference>
<dbReference type="PIRSF" id="PIRSF001456">
    <property type="entry name" value="Chorismate_synth"/>
    <property type="match status" value="1"/>
</dbReference>
<dbReference type="SUPFAM" id="SSF103263">
    <property type="entry name" value="Chorismate synthase, AroC"/>
    <property type="match status" value="1"/>
</dbReference>
<dbReference type="PROSITE" id="PS00788">
    <property type="entry name" value="CHORISMATE_SYNTHASE_2"/>
    <property type="match status" value="1"/>
</dbReference>
<dbReference type="PROSITE" id="PS00789">
    <property type="entry name" value="CHORISMATE_SYNTHASE_3"/>
    <property type="match status" value="1"/>
</dbReference>
<comment type="function">
    <text evidence="1">Catalyzes the anti-1,4-elimination of the C-3 phosphate and the C-6 proR hydrogen from 5-enolpyruvylshikimate-3-phosphate (EPSP) to yield chorismate, which is the branch point compound that serves as the starting substrate for the three terminal pathways of aromatic amino acid biosynthesis. This reaction introduces a second double bond into the aromatic ring system.</text>
</comment>
<comment type="catalytic activity">
    <reaction evidence="1">
        <text>5-O-(1-carboxyvinyl)-3-phosphoshikimate = chorismate + phosphate</text>
        <dbReference type="Rhea" id="RHEA:21020"/>
        <dbReference type="ChEBI" id="CHEBI:29748"/>
        <dbReference type="ChEBI" id="CHEBI:43474"/>
        <dbReference type="ChEBI" id="CHEBI:57701"/>
        <dbReference type="EC" id="4.2.3.5"/>
    </reaction>
</comment>
<comment type="cofactor">
    <cofactor evidence="1">
        <name>FMNH2</name>
        <dbReference type="ChEBI" id="CHEBI:57618"/>
    </cofactor>
    <text evidence="1">Reduced FMN (FMNH(2)).</text>
</comment>
<comment type="pathway">
    <text evidence="1">Metabolic intermediate biosynthesis; chorismate biosynthesis; chorismate from D-erythrose 4-phosphate and phosphoenolpyruvate: step 7/7.</text>
</comment>
<comment type="similarity">
    <text evidence="1">Belongs to the chorismate synthase family.</text>
</comment>
<gene>
    <name evidence="1" type="primary">aroC</name>
    <name type="ordered locus">Msp_0579</name>
</gene>
<name>AROC_METST</name>
<accession>Q2NGS6</accession>
<feature type="chain" id="PRO_1000022514" description="Chorismate synthase">
    <location>
        <begin position="1"/>
        <end position="365"/>
    </location>
</feature>
<feature type="binding site" evidence="1">
    <location>
        <position position="48"/>
    </location>
    <ligand>
        <name>NADP(+)</name>
        <dbReference type="ChEBI" id="CHEBI:58349"/>
    </ligand>
</feature>
<feature type="binding site" evidence="1">
    <location>
        <begin position="125"/>
        <end position="127"/>
    </location>
    <ligand>
        <name>FMN</name>
        <dbReference type="ChEBI" id="CHEBI:58210"/>
    </ligand>
</feature>
<feature type="binding site" evidence="1">
    <location>
        <position position="286"/>
    </location>
    <ligand>
        <name>FMN</name>
        <dbReference type="ChEBI" id="CHEBI:58210"/>
    </ligand>
</feature>
<feature type="binding site" evidence="1">
    <location>
        <begin position="301"/>
        <end position="305"/>
    </location>
    <ligand>
        <name>FMN</name>
        <dbReference type="ChEBI" id="CHEBI:58210"/>
    </ligand>
</feature>
<feature type="binding site" evidence="1">
    <location>
        <position position="328"/>
    </location>
    <ligand>
        <name>FMN</name>
        <dbReference type="ChEBI" id="CHEBI:58210"/>
    </ligand>
</feature>
<proteinExistence type="inferred from homology"/>